<reference key="1">
    <citation type="journal article" date="2003" name="Lancet">
        <title>Sequencing and analysis of the genome of the Whipple's disease bacterium Tropheryma whipplei.</title>
        <authorList>
            <person name="Bentley S.D."/>
            <person name="Maiwald M."/>
            <person name="Murphy L.D."/>
            <person name="Pallen M.J."/>
            <person name="Yeats C.A."/>
            <person name="Dover L.G."/>
            <person name="Norbertczak H.T."/>
            <person name="Besra G.S."/>
            <person name="Quail M.A."/>
            <person name="Harris D.E."/>
            <person name="von Herbay A."/>
            <person name="Goble A."/>
            <person name="Rutter S."/>
            <person name="Squares R."/>
            <person name="Squares S."/>
            <person name="Barrell B.G."/>
            <person name="Parkhill J."/>
            <person name="Relman D.A."/>
        </authorList>
    </citation>
    <scope>NUCLEOTIDE SEQUENCE [LARGE SCALE GENOMIC DNA]</scope>
    <source>
        <strain>TW08/27</strain>
    </source>
</reference>
<name>RS13_TROW8</name>
<keyword id="KW-0687">Ribonucleoprotein</keyword>
<keyword id="KW-0689">Ribosomal protein</keyword>
<keyword id="KW-0694">RNA-binding</keyword>
<keyword id="KW-0699">rRNA-binding</keyword>
<keyword id="KW-0820">tRNA-binding</keyword>
<organism>
    <name type="scientific">Tropheryma whipplei (strain TW08/27)</name>
    <name type="common">Whipple's bacillus</name>
    <dbReference type="NCBI Taxonomy" id="218496"/>
    <lineage>
        <taxon>Bacteria</taxon>
        <taxon>Bacillati</taxon>
        <taxon>Actinomycetota</taxon>
        <taxon>Actinomycetes</taxon>
        <taxon>Micrococcales</taxon>
        <taxon>Tropherymataceae</taxon>
        <taxon>Tropheryma</taxon>
    </lineage>
</organism>
<protein>
    <recommendedName>
        <fullName evidence="1">Small ribosomal subunit protein uS13</fullName>
    </recommendedName>
    <alternativeName>
        <fullName evidence="3">30S ribosomal protein S13</fullName>
    </alternativeName>
</protein>
<evidence type="ECO:0000255" key="1">
    <source>
        <dbReference type="HAMAP-Rule" id="MF_01315"/>
    </source>
</evidence>
<evidence type="ECO:0000256" key="2">
    <source>
        <dbReference type="SAM" id="MobiDB-lite"/>
    </source>
</evidence>
<evidence type="ECO:0000305" key="3"/>
<proteinExistence type="inferred from homology"/>
<comment type="function">
    <text evidence="1">Located at the top of the head of the 30S subunit, it contacts several helices of the 16S rRNA. In the 70S ribosome it contacts the 23S rRNA (bridge B1a) and protein L5 of the 50S subunit (bridge B1b), connecting the 2 subunits; these bridges are implicated in subunit movement. Contacts the tRNAs in the A and P-sites.</text>
</comment>
<comment type="subunit">
    <text evidence="1">Part of the 30S ribosomal subunit. Forms a loose heterodimer with protein S19. Forms two bridges to the 50S subunit in the 70S ribosome.</text>
</comment>
<comment type="similarity">
    <text evidence="1">Belongs to the universal ribosomal protein uS13 family.</text>
</comment>
<gene>
    <name evidence="1" type="primary">rpsM</name>
    <name type="ordered locus">TW230</name>
</gene>
<dbReference type="EMBL" id="BX251410">
    <property type="protein sequence ID" value="CAD66907.1"/>
    <property type="molecule type" value="Genomic_DNA"/>
</dbReference>
<dbReference type="RefSeq" id="WP_011096188.1">
    <property type="nucleotide sequence ID" value="NC_004551.1"/>
</dbReference>
<dbReference type="SMR" id="P66398"/>
<dbReference type="GeneID" id="67388006"/>
<dbReference type="KEGG" id="tws:TW230"/>
<dbReference type="HOGENOM" id="CLU_103849_1_2_11"/>
<dbReference type="GO" id="GO:0005829">
    <property type="term" value="C:cytosol"/>
    <property type="evidence" value="ECO:0007669"/>
    <property type="project" value="TreeGrafter"/>
</dbReference>
<dbReference type="GO" id="GO:0015935">
    <property type="term" value="C:small ribosomal subunit"/>
    <property type="evidence" value="ECO:0007669"/>
    <property type="project" value="TreeGrafter"/>
</dbReference>
<dbReference type="GO" id="GO:0019843">
    <property type="term" value="F:rRNA binding"/>
    <property type="evidence" value="ECO:0007669"/>
    <property type="project" value="UniProtKB-UniRule"/>
</dbReference>
<dbReference type="GO" id="GO:0003735">
    <property type="term" value="F:structural constituent of ribosome"/>
    <property type="evidence" value="ECO:0007669"/>
    <property type="project" value="InterPro"/>
</dbReference>
<dbReference type="GO" id="GO:0000049">
    <property type="term" value="F:tRNA binding"/>
    <property type="evidence" value="ECO:0007669"/>
    <property type="project" value="UniProtKB-UniRule"/>
</dbReference>
<dbReference type="GO" id="GO:0006412">
    <property type="term" value="P:translation"/>
    <property type="evidence" value="ECO:0007669"/>
    <property type="project" value="UniProtKB-UniRule"/>
</dbReference>
<dbReference type="FunFam" id="1.10.8.50:FF:000001">
    <property type="entry name" value="30S ribosomal protein S13"/>
    <property type="match status" value="1"/>
</dbReference>
<dbReference type="FunFam" id="4.10.910.10:FF:000001">
    <property type="entry name" value="30S ribosomal protein S13"/>
    <property type="match status" value="1"/>
</dbReference>
<dbReference type="Gene3D" id="1.10.8.50">
    <property type="match status" value="1"/>
</dbReference>
<dbReference type="Gene3D" id="4.10.910.10">
    <property type="entry name" value="30s ribosomal protein s13, domain 2"/>
    <property type="match status" value="1"/>
</dbReference>
<dbReference type="HAMAP" id="MF_01315">
    <property type="entry name" value="Ribosomal_uS13"/>
    <property type="match status" value="1"/>
</dbReference>
<dbReference type="InterPro" id="IPR027437">
    <property type="entry name" value="Rbsml_uS13_C"/>
</dbReference>
<dbReference type="InterPro" id="IPR001892">
    <property type="entry name" value="Ribosomal_uS13"/>
</dbReference>
<dbReference type="InterPro" id="IPR010979">
    <property type="entry name" value="Ribosomal_uS13-like_H2TH"/>
</dbReference>
<dbReference type="InterPro" id="IPR019980">
    <property type="entry name" value="Ribosomal_uS13_bac-type"/>
</dbReference>
<dbReference type="InterPro" id="IPR018269">
    <property type="entry name" value="Ribosomal_uS13_CS"/>
</dbReference>
<dbReference type="NCBIfam" id="TIGR03631">
    <property type="entry name" value="uS13_bact"/>
    <property type="match status" value="1"/>
</dbReference>
<dbReference type="PANTHER" id="PTHR10871">
    <property type="entry name" value="30S RIBOSOMAL PROTEIN S13/40S RIBOSOMAL PROTEIN S18"/>
    <property type="match status" value="1"/>
</dbReference>
<dbReference type="PANTHER" id="PTHR10871:SF1">
    <property type="entry name" value="SMALL RIBOSOMAL SUBUNIT PROTEIN US13M"/>
    <property type="match status" value="1"/>
</dbReference>
<dbReference type="Pfam" id="PF00416">
    <property type="entry name" value="Ribosomal_S13"/>
    <property type="match status" value="1"/>
</dbReference>
<dbReference type="PIRSF" id="PIRSF002134">
    <property type="entry name" value="Ribosomal_S13"/>
    <property type="match status" value="1"/>
</dbReference>
<dbReference type="SUPFAM" id="SSF46946">
    <property type="entry name" value="S13-like H2TH domain"/>
    <property type="match status" value="1"/>
</dbReference>
<dbReference type="PROSITE" id="PS00646">
    <property type="entry name" value="RIBOSOMAL_S13_1"/>
    <property type="match status" value="1"/>
</dbReference>
<dbReference type="PROSITE" id="PS50159">
    <property type="entry name" value="RIBOSOMAL_S13_2"/>
    <property type="match status" value="1"/>
</dbReference>
<sequence length="124" mass="13775">MARVAGVDIPGNKRVEIGLTYICGIGPTRSRHALTAAGISFDTRVKDLTDDQLVALRAHIQNSYRIEGDLRREVASDIRRKVEIGCYQGLRHRRGLPVNGQRTRTNARSSKGPRRTVAGKKKAR</sequence>
<feature type="chain" id="PRO_0000132164" description="Small ribosomal subunit protein uS13">
    <location>
        <begin position="1"/>
        <end position="124"/>
    </location>
</feature>
<feature type="region of interest" description="Disordered" evidence="2">
    <location>
        <begin position="95"/>
        <end position="124"/>
    </location>
</feature>
<feature type="compositionally biased region" description="Polar residues" evidence="2">
    <location>
        <begin position="100"/>
        <end position="109"/>
    </location>
</feature>
<feature type="compositionally biased region" description="Basic residues" evidence="2">
    <location>
        <begin position="111"/>
        <end position="124"/>
    </location>
</feature>
<accession>P66398</accession>
<accession>P59757</accession>